<reference key="1">
    <citation type="journal article" date="2013" name="PLoS ONE">
        <title>Genomic and secretomic analyses reveal unique features of the lignocellulolytic enzyme system of Penicillium decumbens.</title>
        <authorList>
            <person name="Liu G."/>
            <person name="Zhang L."/>
            <person name="Wei X."/>
            <person name="Zou G."/>
            <person name="Qin Y."/>
            <person name="Ma L."/>
            <person name="Li J."/>
            <person name="Zheng H."/>
            <person name="Wang S."/>
            <person name="Wang C."/>
            <person name="Xun L."/>
            <person name="Zhao G.-P."/>
            <person name="Zhou Z."/>
            <person name="Qu Y."/>
        </authorList>
    </citation>
    <scope>NUCLEOTIDE SEQUENCE [LARGE SCALE GENOMIC DNA]</scope>
    <source>
        <strain>114-2 / CGMCC 5302</strain>
    </source>
</reference>
<reference key="2">
    <citation type="journal article" date="2022" name="Mar. Drugs">
        <title>Identification of PKS-NRPS Hybrid Metabolites in Marine-Derived Penicillium oxalicum.</title>
        <authorList>
            <person name="Li H."/>
            <person name="Zhang W."/>
            <person name="Zhang X."/>
            <person name="Tang S."/>
            <person name="Men P."/>
            <person name="Xiong M."/>
            <person name="Li Z."/>
            <person name="Zhang Y."/>
            <person name="Huang X."/>
            <person name="Lu X."/>
        </authorList>
    </citation>
    <scope>FUNCTION</scope>
    <scope>DISRUPTION PHENOTYPE</scope>
</reference>
<keyword id="KW-0521">NADP</keyword>
<keyword id="KW-0560">Oxidoreductase</keyword>
<keyword id="KW-1185">Reference proteome</keyword>
<organism>
    <name type="scientific">Penicillium oxalicum (strain 114-2 / CGMCC 5302)</name>
    <name type="common">Penicillium decumbens</name>
    <dbReference type="NCBI Taxonomy" id="933388"/>
    <lineage>
        <taxon>Eukaryota</taxon>
        <taxon>Fungi</taxon>
        <taxon>Dikarya</taxon>
        <taxon>Ascomycota</taxon>
        <taxon>Pezizomycotina</taxon>
        <taxon>Eurotiomycetes</taxon>
        <taxon>Eurotiomycetidae</taxon>
        <taxon>Eurotiales</taxon>
        <taxon>Aspergillaceae</taxon>
        <taxon>Penicillium</taxon>
    </lineage>
</organism>
<comment type="function">
    <text evidence="3 5">Short chain dehydrogenase; part of the gene cluster that mediates the biosynthesis of oxopyrrolidines, polyketide-amino acid hybrid compounds with feature structures of tetramic acid (PubMed:36005526). Does not seem to play a role in oxopyrrolidines A and B biosynthesis (PubMed:36005526). May be involved in further modifications of these oxopyrrolidines (Probable).</text>
</comment>
<comment type="pathway">
    <text evidence="6">Secondary metabolite biosynthesis.</text>
</comment>
<comment type="disruption phenotype">
    <text evidence="3">Does not affect the production of oxopyrrolidines A and B.</text>
</comment>
<comment type="similarity">
    <text evidence="5">Belongs to the short-chain dehydrogenases/reductases (SDR) family.</text>
</comment>
<feature type="chain" id="PRO_0000457059" description="Short chain dehydrogenase opdN">
    <location>
        <begin position="1"/>
        <end position="311"/>
    </location>
</feature>
<feature type="active site" description="Proton donor" evidence="2">
    <location>
        <position position="217"/>
    </location>
</feature>
<feature type="active site" description="Lowers pKa of active site Tyr" evidence="2">
    <location>
        <position position="221"/>
    </location>
</feature>
<feature type="binding site" evidence="1">
    <location>
        <position position="48"/>
    </location>
    <ligand>
        <name>NADP(+)</name>
        <dbReference type="ChEBI" id="CHEBI:58349"/>
    </ligand>
</feature>
<feature type="binding site" evidence="1">
    <location>
        <position position="73"/>
    </location>
    <ligand>
        <name>NADP(+)</name>
        <dbReference type="ChEBI" id="CHEBI:58349"/>
    </ligand>
</feature>
<feature type="binding site" evidence="1">
    <location>
        <position position="96"/>
    </location>
    <ligand>
        <name>NADP(+)</name>
        <dbReference type="ChEBI" id="CHEBI:58349"/>
    </ligand>
</feature>
<feature type="binding site" evidence="2">
    <location>
        <position position="123"/>
    </location>
    <ligand>
        <name>NADP(+)</name>
        <dbReference type="ChEBI" id="CHEBI:58349"/>
    </ligand>
</feature>
<feature type="binding site" evidence="2">
    <location>
        <position position="217"/>
    </location>
    <ligand>
        <name>NADP(+)</name>
        <dbReference type="ChEBI" id="CHEBI:58349"/>
    </ligand>
</feature>
<feature type="binding site" evidence="2">
    <location>
        <position position="221"/>
    </location>
    <ligand>
        <name>NADP(+)</name>
        <dbReference type="ChEBI" id="CHEBI:58349"/>
    </ligand>
</feature>
<evidence type="ECO:0000250" key="1">
    <source>
        <dbReference type="UniProtKB" id="L0E2Z4"/>
    </source>
</evidence>
<evidence type="ECO:0000250" key="2">
    <source>
        <dbReference type="UniProtKB" id="O93868"/>
    </source>
</evidence>
<evidence type="ECO:0000269" key="3">
    <source>
    </source>
</evidence>
<evidence type="ECO:0000303" key="4">
    <source>
    </source>
</evidence>
<evidence type="ECO:0000305" key="5"/>
<evidence type="ECO:0000305" key="6">
    <source>
    </source>
</evidence>
<protein>
    <recommendedName>
        <fullName evidence="4">Short chain dehydrogenase opdN</fullName>
        <ecNumber evidence="6">1.1.1.-</ecNumber>
    </recommendedName>
    <alternativeName>
        <fullName evidence="4">Oxopyrrolidines biosynthesis cluster protein N</fullName>
    </alternativeName>
</protein>
<gene>
    <name evidence="4" type="primary">opdN</name>
    <name type="ORF">PDE_01242</name>
</gene>
<sequence>MSDELKDNAAKEASFGAFLTRQLMKSVPAVTGNLDGKVAIVTGANVGLGLACARQLLSLQLSHLILAVRSLRKGEAAALELQASFPHARVEVWALEMESYASIQAFVSRCHSELGRVDIAILNAGLALKRFQTCTNPQTTPREITLQVNFLSTVFLALLLLPILGAKKEKKDAVFIPGRLTLVGSDTVYWVNARELKSRPLLQAANSSEGFDGFEQYKMSKLFVLMFVAKLARDLVSPDQVIVNVACPGLCKGTAFVREPDSNWAKQAIVSSLIRLVGRTPEQGARVYLAAAILQGPKSHGSMISEGDILP</sequence>
<proteinExistence type="inferred from homology"/>
<accession>S7ZC75</accession>
<dbReference type="EC" id="1.1.1.-" evidence="6"/>
<dbReference type="EMBL" id="KB644408">
    <property type="protein sequence ID" value="EPS26306.1"/>
    <property type="molecule type" value="Genomic_DNA"/>
</dbReference>
<dbReference type="SMR" id="S7ZC75"/>
<dbReference type="STRING" id="933388.S7ZC75"/>
<dbReference type="eggNOG" id="KOG1208">
    <property type="taxonomic scope" value="Eukaryota"/>
</dbReference>
<dbReference type="HOGENOM" id="CLU_010194_44_4_1"/>
<dbReference type="OrthoDB" id="191139at2759"/>
<dbReference type="PhylomeDB" id="S7ZC75"/>
<dbReference type="Proteomes" id="UP000019376">
    <property type="component" value="Unassembled WGS sequence"/>
</dbReference>
<dbReference type="GO" id="GO:0016491">
    <property type="term" value="F:oxidoreductase activity"/>
    <property type="evidence" value="ECO:0007669"/>
    <property type="project" value="UniProtKB-KW"/>
</dbReference>
<dbReference type="Gene3D" id="3.40.50.720">
    <property type="entry name" value="NAD(P)-binding Rossmann-like Domain"/>
    <property type="match status" value="1"/>
</dbReference>
<dbReference type="InterPro" id="IPR036291">
    <property type="entry name" value="NAD(P)-bd_dom_sf"/>
</dbReference>
<dbReference type="InterPro" id="IPR002347">
    <property type="entry name" value="SDR_fam"/>
</dbReference>
<dbReference type="PANTHER" id="PTHR43157:SF35">
    <property type="entry name" value="DEHYDROGENASE_REDUCTASE FAMILY PROTEIN, PUTATIVE-RELATED"/>
    <property type="match status" value="1"/>
</dbReference>
<dbReference type="PANTHER" id="PTHR43157">
    <property type="entry name" value="PHOSPHATIDYLINOSITOL-GLYCAN BIOSYNTHESIS CLASS F PROTEIN-RELATED"/>
    <property type="match status" value="1"/>
</dbReference>
<dbReference type="Pfam" id="PF00106">
    <property type="entry name" value="adh_short"/>
    <property type="match status" value="1"/>
</dbReference>
<dbReference type="PRINTS" id="PR00081">
    <property type="entry name" value="GDHRDH"/>
</dbReference>
<dbReference type="SUPFAM" id="SSF51735">
    <property type="entry name" value="NAD(P)-binding Rossmann-fold domains"/>
    <property type="match status" value="1"/>
</dbReference>
<name>OPDN_PENO1</name>